<feature type="chain" id="PRO_1000067688" description="Small ribosomal subunit protein uS15">
    <location>
        <begin position="1"/>
        <end position="89"/>
    </location>
</feature>
<sequence>MSLSTEATAKIVSEFGRDANDTGSTEVQVALLTAQINHLQGHFAEHKKDHHSRRGLLRMVSQRRKLLDYLKRKDVARYTQLIERLGLRR</sequence>
<keyword id="KW-0687">Ribonucleoprotein</keyword>
<keyword id="KW-0689">Ribosomal protein</keyword>
<keyword id="KW-0694">RNA-binding</keyword>
<keyword id="KW-0699">rRNA-binding</keyword>
<protein>
    <recommendedName>
        <fullName evidence="1">Small ribosomal subunit protein uS15</fullName>
    </recommendedName>
    <alternativeName>
        <fullName evidence="2">30S ribosomal protein S15</fullName>
    </alternativeName>
</protein>
<organism>
    <name type="scientific">Escherichia coli O9:H4 (strain HS)</name>
    <dbReference type="NCBI Taxonomy" id="331112"/>
    <lineage>
        <taxon>Bacteria</taxon>
        <taxon>Pseudomonadati</taxon>
        <taxon>Pseudomonadota</taxon>
        <taxon>Gammaproteobacteria</taxon>
        <taxon>Enterobacterales</taxon>
        <taxon>Enterobacteriaceae</taxon>
        <taxon>Escherichia</taxon>
    </lineage>
</organism>
<gene>
    <name evidence="1" type="primary">rpsO</name>
    <name type="ordered locus">EcHS_A3357</name>
</gene>
<reference key="1">
    <citation type="journal article" date="2008" name="J. Bacteriol.">
        <title>The pangenome structure of Escherichia coli: comparative genomic analysis of E. coli commensal and pathogenic isolates.</title>
        <authorList>
            <person name="Rasko D.A."/>
            <person name="Rosovitz M.J."/>
            <person name="Myers G.S.A."/>
            <person name="Mongodin E.F."/>
            <person name="Fricke W.F."/>
            <person name="Gajer P."/>
            <person name="Crabtree J."/>
            <person name="Sebaihia M."/>
            <person name="Thomson N.R."/>
            <person name="Chaudhuri R."/>
            <person name="Henderson I.R."/>
            <person name="Sperandio V."/>
            <person name="Ravel J."/>
        </authorList>
    </citation>
    <scope>NUCLEOTIDE SEQUENCE [LARGE SCALE GENOMIC DNA]</scope>
    <source>
        <strain>HS</strain>
    </source>
</reference>
<proteinExistence type="inferred from homology"/>
<comment type="function">
    <text evidence="1">One of the primary rRNA binding proteins, it binds directly to 16S rRNA where it helps nucleate assembly of the platform of the 30S subunit by binding and bridging several RNA helices of the 16S rRNA.</text>
</comment>
<comment type="function">
    <text evidence="1">Forms an intersubunit bridge (bridge B4) with the 23S rRNA of the 50S subunit in the ribosome.</text>
</comment>
<comment type="subunit">
    <text evidence="1">Part of the 30S ribosomal subunit. Forms a bridge to the 50S subunit in the 70S ribosome, contacting the 23S rRNA.</text>
</comment>
<comment type="similarity">
    <text evidence="1">Belongs to the universal ribosomal protein uS15 family.</text>
</comment>
<evidence type="ECO:0000255" key="1">
    <source>
        <dbReference type="HAMAP-Rule" id="MF_01343"/>
    </source>
</evidence>
<evidence type="ECO:0000305" key="2"/>
<name>RS15_ECOHS</name>
<accession>A8A4Y1</accession>
<dbReference type="EMBL" id="CP000802">
    <property type="protein sequence ID" value="ABV07585.1"/>
    <property type="molecule type" value="Genomic_DNA"/>
</dbReference>
<dbReference type="RefSeq" id="WP_000059466.1">
    <property type="nucleotide sequence ID" value="NC_009800.1"/>
</dbReference>
<dbReference type="SMR" id="A8A4Y1"/>
<dbReference type="GeneID" id="93778818"/>
<dbReference type="KEGG" id="ecx:EcHS_A3357"/>
<dbReference type="HOGENOM" id="CLU_148518_0_0_6"/>
<dbReference type="GO" id="GO:0022627">
    <property type="term" value="C:cytosolic small ribosomal subunit"/>
    <property type="evidence" value="ECO:0007669"/>
    <property type="project" value="TreeGrafter"/>
</dbReference>
<dbReference type="GO" id="GO:0019843">
    <property type="term" value="F:rRNA binding"/>
    <property type="evidence" value="ECO:0007669"/>
    <property type="project" value="UniProtKB-UniRule"/>
</dbReference>
<dbReference type="GO" id="GO:0003735">
    <property type="term" value="F:structural constituent of ribosome"/>
    <property type="evidence" value="ECO:0007669"/>
    <property type="project" value="InterPro"/>
</dbReference>
<dbReference type="GO" id="GO:0006412">
    <property type="term" value="P:translation"/>
    <property type="evidence" value="ECO:0007669"/>
    <property type="project" value="UniProtKB-UniRule"/>
</dbReference>
<dbReference type="CDD" id="cd00353">
    <property type="entry name" value="Ribosomal_S15p_S13e"/>
    <property type="match status" value="1"/>
</dbReference>
<dbReference type="FunFam" id="1.10.287.10:FF:000002">
    <property type="entry name" value="30S ribosomal protein S15"/>
    <property type="match status" value="1"/>
</dbReference>
<dbReference type="Gene3D" id="6.10.250.3130">
    <property type="match status" value="1"/>
</dbReference>
<dbReference type="Gene3D" id="1.10.287.10">
    <property type="entry name" value="S15/NS1, RNA-binding"/>
    <property type="match status" value="1"/>
</dbReference>
<dbReference type="HAMAP" id="MF_01343_B">
    <property type="entry name" value="Ribosomal_uS15_B"/>
    <property type="match status" value="1"/>
</dbReference>
<dbReference type="InterPro" id="IPR000589">
    <property type="entry name" value="Ribosomal_uS15"/>
</dbReference>
<dbReference type="InterPro" id="IPR005290">
    <property type="entry name" value="Ribosomal_uS15_bac-type"/>
</dbReference>
<dbReference type="InterPro" id="IPR009068">
    <property type="entry name" value="uS15_NS1_RNA-bd_sf"/>
</dbReference>
<dbReference type="NCBIfam" id="TIGR00952">
    <property type="entry name" value="S15_bact"/>
    <property type="match status" value="1"/>
</dbReference>
<dbReference type="PANTHER" id="PTHR23321">
    <property type="entry name" value="RIBOSOMAL PROTEIN S15, BACTERIAL AND ORGANELLAR"/>
    <property type="match status" value="1"/>
</dbReference>
<dbReference type="PANTHER" id="PTHR23321:SF26">
    <property type="entry name" value="SMALL RIBOSOMAL SUBUNIT PROTEIN US15M"/>
    <property type="match status" value="1"/>
</dbReference>
<dbReference type="Pfam" id="PF00312">
    <property type="entry name" value="Ribosomal_S15"/>
    <property type="match status" value="1"/>
</dbReference>
<dbReference type="SMART" id="SM01387">
    <property type="entry name" value="Ribosomal_S15"/>
    <property type="match status" value="1"/>
</dbReference>
<dbReference type="SUPFAM" id="SSF47060">
    <property type="entry name" value="S15/NS1 RNA-binding domain"/>
    <property type="match status" value="1"/>
</dbReference>
<dbReference type="PROSITE" id="PS00362">
    <property type="entry name" value="RIBOSOMAL_S15"/>
    <property type="match status" value="1"/>
</dbReference>